<proteinExistence type="inferred from homology"/>
<organism>
    <name type="scientific">Heterodontus francisci</name>
    <name type="common">Horn shark</name>
    <name type="synonym">Cestracion francisci</name>
    <dbReference type="NCBI Taxonomy" id="7792"/>
    <lineage>
        <taxon>Eukaryota</taxon>
        <taxon>Metazoa</taxon>
        <taxon>Chordata</taxon>
        <taxon>Craniata</taxon>
        <taxon>Vertebrata</taxon>
        <taxon>Chondrichthyes</taxon>
        <taxon>Elasmobranchii</taxon>
        <taxon>Galeomorphii</taxon>
        <taxon>Heterodontoidea</taxon>
        <taxon>Heterodontiformes</taxon>
        <taxon>Heterodontidae</taxon>
        <taxon>Heterodontus</taxon>
    </lineage>
</organism>
<evidence type="ECO:0000250" key="1"/>
<evidence type="ECO:0000255" key="2">
    <source>
        <dbReference type="PROSITE-ProRule" id="PRU00108"/>
    </source>
</evidence>
<evidence type="ECO:0000256" key="3">
    <source>
        <dbReference type="SAM" id="MobiDB-lite"/>
    </source>
</evidence>
<evidence type="ECO:0000305" key="4"/>
<sequence length="271" mass="30232">MSGMEVWSDPPRSCRMEQPATQQVATCSFPQNIKEENAYCLYDSEKCPKSAAATDLSTFPRLTSESCSNNDTTTSGGVPVPGYFRLSQAYPTSKQTLYSNTGQVGASPFVPQSQIRFGTPPSSASTPTELGRKGSEGTSPGHLTCSSEREEAEAAASSANEESSPVPSESNKNSPEKETKGEVKAENGANWLTAKSGRKKRCPYTKHQTLELEKEFLFNMYLTRERRLEISRSVHLTDRQVKIWFQNRRMKLKKMNRENRIRELTANFSFS</sequence>
<accession>Q9IA27</accession>
<dbReference type="EMBL" id="AF224262">
    <property type="protein sequence ID" value="AAF44647.1"/>
    <property type="molecule type" value="Genomic_DNA"/>
</dbReference>
<dbReference type="SMR" id="Q9IA27"/>
<dbReference type="GO" id="GO:0005634">
    <property type="term" value="C:nucleus"/>
    <property type="evidence" value="ECO:0007669"/>
    <property type="project" value="UniProtKB-SubCell"/>
</dbReference>
<dbReference type="GO" id="GO:0000981">
    <property type="term" value="F:DNA-binding transcription factor activity, RNA polymerase II-specific"/>
    <property type="evidence" value="ECO:0007669"/>
    <property type="project" value="InterPro"/>
</dbReference>
<dbReference type="GO" id="GO:0000978">
    <property type="term" value="F:RNA polymerase II cis-regulatory region sequence-specific DNA binding"/>
    <property type="evidence" value="ECO:0007669"/>
    <property type="project" value="TreeGrafter"/>
</dbReference>
<dbReference type="CDD" id="cd00086">
    <property type="entry name" value="homeodomain"/>
    <property type="match status" value="1"/>
</dbReference>
<dbReference type="FunFam" id="1.10.10.60:FF:000018">
    <property type="entry name" value="Homeobox A10"/>
    <property type="match status" value="1"/>
</dbReference>
<dbReference type="Gene3D" id="1.10.10.60">
    <property type="entry name" value="Homeodomain-like"/>
    <property type="match status" value="1"/>
</dbReference>
<dbReference type="InterPro" id="IPR001356">
    <property type="entry name" value="HD"/>
</dbReference>
<dbReference type="InterPro" id="IPR020479">
    <property type="entry name" value="HD_metazoa"/>
</dbReference>
<dbReference type="InterPro" id="IPR017970">
    <property type="entry name" value="Homeobox_CS"/>
</dbReference>
<dbReference type="InterPro" id="IPR009057">
    <property type="entry name" value="Homeodomain-like_sf"/>
</dbReference>
<dbReference type="InterPro" id="IPR046333">
    <property type="entry name" value="HXA10/ABDB-like"/>
</dbReference>
<dbReference type="PANTHER" id="PTHR45874">
    <property type="entry name" value="HOMEOBOX PROTEIN ABDOMINAL-B"/>
    <property type="match status" value="1"/>
</dbReference>
<dbReference type="PANTHER" id="PTHR45874:SF1">
    <property type="entry name" value="HOMEOBOX PROTEIN HOX-A10"/>
    <property type="match status" value="1"/>
</dbReference>
<dbReference type="Pfam" id="PF00046">
    <property type="entry name" value="Homeodomain"/>
    <property type="match status" value="1"/>
</dbReference>
<dbReference type="PRINTS" id="PR00024">
    <property type="entry name" value="HOMEOBOX"/>
</dbReference>
<dbReference type="SMART" id="SM00389">
    <property type="entry name" value="HOX"/>
    <property type="match status" value="1"/>
</dbReference>
<dbReference type="SUPFAM" id="SSF46689">
    <property type="entry name" value="Homeodomain-like"/>
    <property type="match status" value="1"/>
</dbReference>
<dbReference type="PROSITE" id="PS00027">
    <property type="entry name" value="HOMEOBOX_1"/>
    <property type="match status" value="1"/>
</dbReference>
<dbReference type="PROSITE" id="PS50071">
    <property type="entry name" value="HOMEOBOX_2"/>
    <property type="match status" value="1"/>
</dbReference>
<name>HXA10_HETFR</name>
<keyword id="KW-0217">Developmental protein</keyword>
<keyword id="KW-0238">DNA-binding</keyword>
<keyword id="KW-0371">Homeobox</keyword>
<keyword id="KW-0539">Nucleus</keyword>
<keyword id="KW-0804">Transcription</keyword>
<keyword id="KW-0805">Transcription regulation</keyword>
<comment type="function">
    <text evidence="1">Sequence-specific transcription factor which is part of a developmental regulatory system that provides cells with specific positional identities on the anterior-posterior axis.</text>
</comment>
<comment type="subcellular location">
    <subcellularLocation>
        <location evidence="2">Nucleus</location>
    </subcellularLocation>
</comment>
<comment type="similarity">
    <text evidence="4">Belongs to the Abd-B homeobox family.</text>
</comment>
<protein>
    <recommendedName>
        <fullName>Homeobox protein Hox-A10</fullName>
    </recommendedName>
</protein>
<gene>
    <name type="primary">HOXA10</name>
</gene>
<reference key="1">
    <citation type="journal article" date="2000" name="Proc. Natl. Acad. Sci. U.S.A.">
        <title>Hox cluster genomics in the horn shark, Heterodontus francisci.</title>
        <authorList>
            <person name="Kim C.B."/>
            <person name="Amemiya C."/>
            <person name="Bailey W."/>
            <person name="Kawasaki K."/>
            <person name="Mezey J."/>
            <person name="Miller W."/>
            <person name="Minoshima S."/>
            <person name="Shimizu N."/>
            <person name="Wagner G."/>
            <person name="Ruddle F."/>
        </authorList>
    </citation>
    <scope>NUCLEOTIDE SEQUENCE [GENOMIC DNA]</scope>
</reference>
<feature type="chain" id="PRO_0000200093" description="Homeobox protein Hox-A10">
    <location>
        <begin position="1"/>
        <end position="271"/>
    </location>
</feature>
<feature type="DNA-binding region" description="Homeobox" evidence="2">
    <location>
        <begin position="197"/>
        <end position="256"/>
    </location>
</feature>
<feature type="region of interest" description="Disordered" evidence="3">
    <location>
        <begin position="61"/>
        <end position="82"/>
    </location>
</feature>
<feature type="region of interest" description="Disordered" evidence="3">
    <location>
        <begin position="109"/>
        <end position="199"/>
    </location>
</feature>
<feature type="compositionally biased region" description="Polar residues" evidence="3">
    <location>
        <begin position="61"/>
        <end position="76"/>
    </location>
</feature>
<feature type="compositionally biased region" description="Polar residues" evidence="3">
    <location>
        <begin position="109"/>
        <end position="128"/>
    </location>
</feature>
<feature type="compositionally biased region" description="Low complexity" evidence="3">
    <location>
        <begin position="154"/>
        <end position="173"/>
    </location>
</feature>
<feature type="compositionally biased region" description="Basic and acidic residues" evidence="3">
    <location>
        <begin position="174"/>
        <end position="185"/>
    </location>
</feature>